<accession>P74689</accession>
<dbReference type="EC" id="4.2.1.9" evidence="1"/>
<dbReference type="EMBL" id="BA000022">
    <property type="protein sequence ID" value="BAA18807.1"/>
    <property type="molecule type" value="Genomic_DNA"/>
</dbReference>
<dbReference type="PIR" id="S76895">
    <property type="entry name" value="S76895"/>
</dbReference>
<dbReference type="PDB" id="6NTE">
    <property type="method" value="X-ray"/>
    <property type="resolution" value="2.33 A"/>
    <property type="chains" value="A/B=1-561"/>
</dbReference>
<dbReference type="PDBsum" id="6NTE"/>
<dbReference type="SMR" id="P74689"/>
<dbReference type="FunCoup" id="P74689">
    <property type="interactions" value="454"/>
</dbReference>
<dbReference type="IntAct" id="P74689">
    <property type="interactions" value="6"/>
</dbReference>
<dbReference type="STRING" id="1148.gene:10500579"/>
<dbReference type="PaxDb" id="1148-1653897"/>
<dbReference type="EnsemblBacteria" id="BAA18807">
    <property type="protein sequence ID" value="BAA18807"/>
    <property type="gene ID" value="BAA18807"/>
</dbReference>
<dbReference type="KEGG" id="syn:slr0452"/>
<dbReference type="eggNOG" id="COG0129">
    <property type="taxonomic scope" value="Bacteria"/>
</dbReference>
<dbReference type="InParanoid" id="P74689"/>
<dbReference type="PhylomeDB" id="P74689"/>
<dbReference type="UniPathway" id="UPA00047">
    <property type="reaction ID" value="UER00057"/>
</dbReference>
<dbReference type="UniPathway" id="UPA00049">
    <property type="reaction ID" value="UER00061"/>
</dbReference>
<dbReference type="Proteomes" id="UP000001425">
    <property type="component" value="Chromosome"/>
</dbReference>
<dbReference type="GO" id="GO:0051537">
    <property type="term" value="F:2 iron, 2 sulfur cluster binding"/>
    <property type="evidence" value="ECO:0007669"/>
    <property type="project" value="UniProtKB-UniRule"/>
</dbReference>
<dbReference type="GO" id="GO:0004160">
    <property type="term" value="F:dihydroxy-acid dehydratase activity"/>
    <property type="evidence" value="ECO:0000318"/>
    <property type="project" value="GO_Central"/>
</dbReference>
<dbReference type="GO" id="GO:0000287">
    <property type="term" value="F:magnesium ion binding"/>
    <property type="evidence" value="ECO:0007669"/>
    <property type="project" value="UniProtKB-UniRule"/>
</dbReference>
<dbReference type="GO" id="GO:0009082">
    <property type="term" value="P:branched-chain amino acid biosynthetic process"/>
    <property type="evidence" value="ECO:0000318"/>
    <property type="project" value="GO_Central"/>
</dbReference>
<dbReference type="GO" id="GO:0009097">
    <property type="term" value="P:isoleucine biosynthetic process"/>
    <property type="evidence" value="ECO:0007669"/>
    <property type="project" value="UniProtKB-UniRule"/>
</dbReference>
<dbReference type="GO" id="GO:0009099">
    <property type="term" value="P:L-valine biosynthetic process"/>
    <property type="evidence" value="ECO:0007669"/>
    <property type="project" value="UniProtKB-UniRule"/>
</dbReference>
<dbReference type="FunFam" id="3.50.30.80:FF:000001">
    <property type="entry name" value="Dihydroxy-acid dehydratase"/>
    <property type="match status" value="1"/>
</dbReference>
<dbReference type="Gene3D" id="3.50.30.80">
    <property type="entry name" value="IlvD/EDD C-terminal domain-like"/>
    <property type="match status" value="1"/>
</dbReference>
<dbReference type="HAMAP" id="MF_00012">
    <property type="entry name" value="IlvD"/>
    <property type="match status" value="1"/>
</dbReference>
<dbReference type="InterPro" id="IPR050165">
    <property type="entry name" value="DHAD_IlvD/Edd"/>
</dbReference>
<dbReference type="InterPro" id="IPR042096">
    <property type="entry name" value="Dihydro-acid_dehy_C"/>
</dbReference>
<dbReference type="InterPro" id="IPR004404">
    <property type="entry name" value="DihydroxyA_deHydtase"/>
</dbReference>
<dbReference type="InterPro" id="IPR020558">
    <property type="entry name" value="DiOHA_6PGluconate_deHydtase_CS"/>
</dbReference>
<dbReference type="InterPro" id="IPR056740">
    <property type="entry name" value="ILV_EDD_C"/>
</dbReference>
<dbReference type="InterPro" id="IPR000581">
    <property type="entry name" value="ILV_EDD_N"/>
</dbReference>
<dbReference type="InterPro" id="IPR037237">
    <property type="entry name" value="IlvD/EDD_N"/>
</dbReference>
<dbReference type="NCBIfam" id="TIGR00110">
    <property type="entry name" value="ilvD"/>
    <property type="match status" value="1"/>
</dbReference>
<dbReference type="NCBIfam" id="NF002068">
    <property type="entry name" value="PRK00911.1"/>
    <property type="match status" value="1"/>
</dbReference>
<dbReference type="PANTHER" id="PTHR21000">
    <property type="entry name" value="DIHYDROXY-ACID DEHYDRATASE DAD"/>
    <property type="match status" value="1"/>
</dbReference>
<dbReference type="PANTHER" id="PTHR21000:SF5">
    <property type="entry name" value="DIHYDROXY-ACID DEHYDRATASE, MITOCHONDRIAL"/>
    <property type="match status" value="1"/>
</dbReference>
<dbReference type="Pfam" id="PF24877">
    <property type="entry name" value="ILV_EDD_C"/>
    <property type="match status" value="1"/>
</dbReference>
<dbReference type="Pfam" id="PF00920">
    <property type="entry name" value="ILVD_EDD_N"/>
    <property type="match status" value="1"/>
</dbReference>
<dbReference type="SUPFAM" id="SSF143975">
    <property type="entry name" value="IlvD/EDD N-terminal domain-like"/>
    <property type="match status" value="1"/>
</dbReference>
<dbReference type="SUPFAM" id="SSF52016">
    <property type="entry name" value="LeuD/IlvD-like"/>
    <property type="match status" value="1"/>
</dbReference>
<dbReference type="PROSITE" id="PS00886">
    <property type="entry name" value="ILVD_EDD_1"/>
    <property type="match status" value="1"/>
</dbReference>
<dbReference type="PROSITE" id="PS00887">
    <property type="entry name" value="ILVD_EDD_2"/>
    <property type="match status" value="1"/>
</dbReference>
<reference key="1">
    <citation type="journal article" date="1996" name="DNA Res.">
        <title>Sequence analysis of the genome of the unicellular cyanobacterium Synechocystis sp. strain PCC6803. II. Sequence determination of the entire genome and assignment of potential protein-coding regions.</title>
        <authorList>
            <person name="Kaneko T."/>
            <person name="Sato S."/>
            <person name="Kotani H."/>
            <person name="Tanaka A."/>
            <person name="Asamizu E."/>
            <person name="Nakamura Y."/>
            <person name="Miyajima N."/>
            <person name="Hirosawa M."/>
            <person name="Sugiura M."/>
            <person name="Sasamoto S."/>
            <person name="Kimura T."/>
            <person name="Hosouchi T."/>
            <person name="Matsuno A."/>
            <person name="Muraki A."/>
            <person name="Nakazaki N."/>
            <person name="Naruo K."/>
            <person name="Okumura S."/>
            <person name="Shimpo S."/>
            <person name="Takeuchi C."/>
            <person name="Wada T."/>
            <person name="Watanabe A."/>
            <person name="Yamada M."/>
            <person name="Yasuda M."/>
            <person name="Tabata S."/>
        </authorList>
    </citation>
    <scope>NUCLEOTIDE SEQUENCE [LARGE SCALE GENOMIC DNA]</scope>
    <source>
        <strain>ATCC 27184 / PCC 6803 / Kazusa</strain>
    </source>
</reference>
<gene>
    <name evidence="1" type="primary">ilvD</name>
    <name type="ordered locus">slr0452</name>
</gene>
<keyword id="KW-0001">2Fe-2S</keyword>
<keyword id="KW-0002">3D-structure</keyword>
<keyword id="KW-0028">Amino-acid biosynthesis</keyword>
<keyword id="KW-0100">Branched-chain amino acid biosynthesis</keyword>
<keyword id="KW-0408">Iron</keyword>
<keyword id="KW-0411">Iron-sulfur</keyword>
<keyword id="KW-0456">Lyase</keyword>
<keyword id="KW-0460">Magnesium</keyword>
<keyword id="KW-0479">Metal-binding</keyword>
<keyword id="KW-1185">Reference proteome</keyword>
<protein>
    <recommendedName>
        <fullName evidence="1">Dihydroxy-acid dehydratase</fullName>
        <shortName evidence="1">DAD</shortName>
        <ecNumber evidence="1">4.2.1.9</ecNumber>
    </recommendedName>
</protein>
<organism>
    <name type="scientific">Synechocystis sp. (strain ATCC 27184 / PCC 6803 / Kazusa)</name>
    <dbReference type="NCBI Taxonomy" id="1111708"/>
    <lineage>
        <taxon>Bacteria</taxon>
        <taxon>Bacillati</taxon>
        <taxon>Cyanobacteriota</taxon>
        <taxon>Cyanophyceae</taxon>
        <taxon>Synechococcales</taxon>
        <taxon>Merismopediaceae</taxon>
        <taxon>Synechocystis</taxon>
    </lineage>
</organism>
<feature type="chain" id="PRO_0000103520" description="Dihydroxy-acid dehydratase">
    <location>
        <begin position="1"/>
        <end position="561"/>
    </location>
</feature>
<feature type="active site" description="Proton acceptor" evidence="1">
    <location>
        <position position="473"/>
    </location>
</feature>
<feature type="binding site" evidence="1">
    <location>
        <position position="50"/>
    </location>
    <ligand>
        <name>[2Fe-2S] cluster</name>
        <dbReference type="ChEBI" id="CHEBI:190135"/>
    </ligand>
</feature>
<feature type="binding site" evidence="1">
    <location>
        <position position="82"/>
    </location>
    <ligand>
        <name>Mg(2+)</name>
        <dbReference type="ChEBI" id="CHEBI:18420"/>
    </ligand>
</feature>
<feature type="binding site" evidence="1">
    <location>
        <position position="123"/>
    </location>
    <ligand>
        <name>[2Fe-2S] cluster</name>
        <dbReference type="ChEBI" id="CHEBI:190135"/>
    </ligand>
</feature>
<feature type="binding site" evidence="1">
    <location>
        <position position="124"/>
    </location>
    <ligand>
        <name>Mg(2+)</name>
        <dbReference type="ChEBI" id="CHEBI:18420"/>
    </ligand>
</feature>
<feature type="binding site" description="via carbamate group" evidence="1">
    <location>
        <position position="125"/>
    </location>
    <ligand>
        <name>Mg(2+)</name>
        <dbReference type="ChEBI" id="CHEBI:18420"/>
    </ligand>
</feature>
<feature type="binding site" evidence="1">
    <location>
        <position position="195"/>
    </location>
    <ligand>
        <name>[2Fe-2S] cluster</name>
        <dbReference type="ChEBI" id="CHEBI:190135"/>
    </ligand>
</feature>
<feature type="binding site" evidence="1">
    <location>
        <position position="447"/>
    </location>
    <ligand>
        <name>Mg(2+)</name>
        <dbReference type="ChEBI" id="CHEBI:18420"/>
    </ligand>
</feature>
<feature type="modified residue" description="N6-carboxylysine" evidence="1">
    <location>
        <position position="125"/>
    </location>
</feature>
<feature type="strand" evidence="2">
    <location>
        <begin position="37"/>
        <end position="42"/>
    </location>
</feature>
<feature type="helix" evidence="2">
    <location>
        <begin position="53"/>
        <end position="67"/>
    </location>
</feature>
<feature type="strand" evidence="2">
    <location>
        <begin position="71"/>
        <end position="76"/>
    </location>
</feature>
<feature type="turn" evidence="2">
    <location>
        <begin position="81"/>
        <end position="83"/>
    </location>
</feature>
<feature type="helix" evidence="2">
    <location>
        <begin position="89"/>
        <end position="92"/>
    </location>
</feature>
<feature type="helix" evidence="2">
    <location>
        <begin position="93"/>
        <end position="111"/>
    </location>
</feature>
<feature type="strand" evidence="2">
    <location>
        <begin position="115"/>
        <end position="121"/>
    </location>
</feature>
<feature type="turn" evidence="2">
    <location>
        <begin position="125"/>
        <end position="127"/>
    </location>
</feature>
<feature type="helix" evidence="2">
    <location>
        <begin position="128"/>
        <end position="137"/>
    </location>
</feature>
<feature type="strand" evidence="2">
    <location>
        <begin position="141"/>
        <end position="145"/>
    </location>
</feature>
<feature type="turn" evidence="2">
    <location>
        <begin position="194"/>
        <end position="196"/>
    </location>
</feature>
<feature type="strand" evidence="2">
    <location>
        <begin position="197"/>
        <end position="199"/>
    </location>
</feature>
<feature type="helix" evidence="2">
    <location>
        <begin position="200"/>
        <end position="210"/>
    </location>
</feature>
<feature type="helix" evidence="2">
    <location>
        <begin position="218"/>
        <end position="220"/>
    </location>
</feature>
<feature type="helix" evidence="2">
    <location>
        <begin position="226"/>
        <end position="245"/>
    </location>
</feature>
<feature type="helix" evidence="2">
    <location>
        <begin position="249"/>
        <end position="252"/>
    </location>
</feature>
<feature type="helix" evidence="2">
    <location>
        <begin position="255"/>
        <end position="267"/>
    </location>
</feature>
<feature type="helix" evidence="2">
    <location>
        <begin position="273"/>
        <end position="285"/>
    </location>
</feature>
<feature type="helix" evidence="2">
    <location>
        <begin position="291"/>
        <end position="300"/>
    </location>
</feature>
<feature type="turn" evidence="2">
    <location>
        <begin position="308"/>
        <end position="310"/>
    </location>
</feature>
<feature type="strand" evidence="2">
    <location>
        <begin position="311"/>
        <end position="313"/>
    </location>
</feature>
<feature type="helix" evidence="2">
    <location>
        <begin position="315"/>
        <end position="320"/>
    </location>
</feature>
<feature type="helix" evidence="2">
    <location>
        <begin position="323"/>
        <end position="333"/>
    </location>
</feature>
<feature type="helix" evidence="2">
    <location>
        <begin position="349"/>
        <end position="352"/>
    </location>
</feature>
<feature type="turn" evidence="2">
    <location>
        <begin position="353"/>
        <end position="355"/>
    </location>
</feature>
<feature type="strand" evidence="2">
    <location>
        <begin position="374"/>
        <end position="377"/>
    </location>
</feature>
<feature type="strand" evidence="2">
    <location>
        <begin position="379"/>
        <end position="382"/>
    </location>
</feature>
<feature type="strand" evidence="2">
    <location>
        <begin position="391"/>
        <end position="395"/>
    </location>
</feature>
<feature type="strand" evidence="2">
    <location>
        <begin position="403"/>
        <end position="413"/>
    </location>
</feature>
<feature type="helix" evidence="2">
    <location>
        <begin position="414"/>
        <end position="422"/>
    </location>
</feature>
<feature type="strand" evidence="2">
    <location>
        <begin position="431"/>
        <end position="434"/>
    </location>
</feature>
<feature type="turn" evidence="2">
    <location>
        <begin position="439"/>
        <end position="443"/>
    </location>
</feature>
<feature type="helix" evidence="2">
    <location>
        <begin position="450"/>
        <end position="457"/>
    </location>
</feature>
<feature type="turn" evidence="2">
    <location>
        <begin position="461"/>
        <end position="463"/>
    </location>
</feature>
<feature type="strand" evidence="2">
    <location>
        <begin position="465"/>
        <end position="472"/>
    </location>
</feature>
<feature type="strand" evidence="2">
    <location>
        <begin position="480"/>
        <end position="486"/>
    </location>
</feature>
<feature type="helix" evidence="2">
    <location>
        <begin position="488"/>
        <end position="490"/>
    </location>
</feature>
<feature type="helix" evidence="2">
    <location>
        <begin position="493"/>
        <end position="496"/>
    </location>
</feature>
<feature type="strand" evidence="2">
    <location>
        <begin position="502"/>
        <end position="506"/>
    </location>
</feature>
<feature type="turn" evidence="2">
    <location>
        <begin position="507"/>
        <end position="510"/>
    </location>
</feature>
<feature type="strand" evidence="2">
    <location>
        <begin position="511"/>
        <end position="514"/>
    </location>
</feature>
<feature type="helix" evidence="2">
    <location>
        <begin position="518"/>
        <end position="527"/>
    </location>
</feature>
<feature type="helix" evidence="2">
    <location>
        <begin position="538"/>
        <end position="546"/>
    </location>
</feature>
<feature type="helix" evidence="2">
    <location>
        <begin position="550"/>
        <end position="552"/>
    </location>
</feature>
<feature type="strand" evidence="2">
    <location>
        <begin position="556"/>
        <end position="559"/>
    </location>
</feature>
<comment type="function">
    <text evidence="1">Functions in the biosynthesis of branched-chain amino acids. Catalyzes the dehydration of (2R,3R)-2,3-dihydroxy-3-methylpentanoate (2,3-dihydroxy-3-methylvalerate) into 2-oxo-3-methylpentanoate (2-oxo-3-methylvalerate) and of (2R)-2,3-dihydroxy-3-methylbutanoate (2,3-dihydroxyisovalerate) into 2-oxo-3-methylbutanoate (2-oxoisovalerate), the penultimate precursor to L-isoleucine and L-valine, respectively.</text>
</comment>
<comment type="catalytic activity">
    <reaction evidence="1">
        <text>(2R)-2,3-dihydroxy-3-methylbutanoate = 3-methyl-2-oxobutanoate + H2O</text>
        <dbReference type="Rhea" id="RHEA:24809"/>
        <dbReference type="ChEBI" id="CHEBI:11851"/>
        <dbReference type="ChEBI" id="CHEBI:15377"/>
        <dbReference type="ChEBI" id="CHEBI:49072"/>
        <dbReference type="EC" id="4.2.1.9"/>
    </reaction>
    <physiologicalReaction direction="left-to-right" evidence="1">
        <dbReference type="Rhea" id="RHEA:24810"/>
    </physiologicalReaction>
</comment>
<comment type="catalytic activity">
    <reaction evidence="1">
        <text>(2R,3R)-2,3-dihydroxy-3-methylpentanoate = (S)-3-methyl-2-oxopentanoate + H2O</text>
        <dbReference type="Rhea" id="RHEA:27694"/>
        <dbReference type="ChEBI" id="CHEBI:15377"/>
        <dbReference type="ChEBI" id="CHEBI:35146"/>
        <dbReference type="ChEBI" id="CHEBI:49258"/>
        <dbReference type="EC" id="4.2.1.9"/>
    </reaction>
    <physiologicalReaction direction="left-to-right" evidence="1">
        <dbReference type="Rhea" id="RHEA:27695"/>
    </physiologicalReaction>
</comment>
<comment type="cofactor">
    <cofactor evidence="1">
        <name>[2Fe-2S] cluster</name>
        <dbReference type="ChEBI" id="CHEBI:190135"/>
    </cofactor>
    <text evidence="1">Binds 1 [2Fe-2S] cluster per subunit. This cluster acts as a Lewis acid cofactor.</text>
</comment>
<comment type="cofactor">
    <cofactor evidence="1">
        <name>Mg(2+)</name>
        <dbReference type="ChEBI" id="CHEBI:18420"/>
    </cofactor>
</comment>
<comment type="pathway">
    <text evidence="1">Amino-acid biosynthesis; L-isoleucine biosynthesis; L-isoleucine from 2-oxobutanoate: step 3/4.</text>
</comment>
<comment type="pathway">
    <text evidence="1">Amino-acid biosynthesis; L-valine biosynthesis; L-valine from pyruvate: step 3/4.</text>
</comment>
<comment type="subunit">
    <text evidence="1">Homodimer.</text>
</comment>
<comment type="similarity">
    <text evidence="1">Belongs to the IlvD/Edd family.</text>
</comment>
<evidence type="ECO:0000255" key="1">
    <source>
        <dbReference type="HAMAP-Rule" id="MF_00012"/>
    </source>
</evidence>
<evidence type="ECO:0007829" key="2">
    <source>
        <dbReference type="PDB" id="6NTE"/>
    </source>
</evidence>
<name>ILVD_SYNY3</name>
<proteinExistence type="evidence at protein level"/>
<sequence>MSNNPRSQVITQGTQRSPNRAMLRAVGFGDDDFTKPIVGIANGYSTITPCNMGINDLALRAEAGLRTAGAMPQLFGTITISDGISMGTEGMKYSLVSREVIADSIETVCNGQRMDGVLAIGGCDKNMPGAMIAMARLNIPSIFVYGGTIKPGHYAGEDLTVVSAFEAVGQYSAGKIDEETLYGIERNACPGAGSCGGMFTANTMSSAFEAMGMSLPYSSTMAAVDGEKADSTEESAKVLVEAIKKQILPSQILTRKAFENAIAVIMAVGGSTNAVLHLLAIANTIGVPLSLDDFETIRHKVPVLCDLKPSGKYVTTNLHAAGGIPQVMKILLVNGILHGDALTITGQTIAEVLADIPDQPPAGQDVIHSWDDPVYQEGHLAVLKGNLATEGSVAKISGVKKPVITGPAKVFESEEDCLEAILAGKIQAGDVVVVRYEGPKGGPGMREMLAPTSAIIGAGLGDSVGLITDGRFSGGTYGLVVGHVAPEAYVGGAIALVQEGDQITIDAGKRLLQLNISEEELAQRRAQWTPPQPRYPRGILAKYAKLVSSSSLGAVTDIDLF</sequence>